<sequence>MRVTDFHFDLPDELIARYPTAERSASRLLYLNGNTGEYQDQQFNDLLEHIHSGDLLIFNNTRVIPARLYGRKASGGKLEVLVERVLDEHRCLAHIRSSKAPKENAEIFLGEDKLGEGNGFKAIMVARYDALFELKFEASQPLFDLLQQAGHMPLPPYIDRPDEDADQERYQTVYSKVLGAVAAPTAGLHFDHQMLQKLQEKGVQTAFVTLHVGAGTFQPVRVETIEEHKMHAEYAEVSQDVVDKILATKAQGKRVICVGTTSVRSIESAAQAAEKEGKLIAPFYSDTTIFLYPGKTFRIVDALVTNFHLPESTLIMLVSAFAGFKNCMNAYQHAVESQYRFFSYGDAMFITKNENALGDVP</sequence>
<keyword id="KW-0963">Cytoplasm</keyword>
<keyword id="KW-0671">Queuosine biosynthesis</keyword>
<keyword id="KW-1185">Reference proteome</keyword>
<keyword id="KW-0949">S-adenosyl-L-methionine</keyword>
<keyword id="KW-0808">Transferase</keyword>
<protein>
    <recommendedName>
        <fullName evidence="1">S-adenosylmethionine:tRNA ribosyltransferase-isomerase</fullName>
        <ecNumber evidence="1">2.4.99.17</ecNumber>
    </recommendedName>
    <alternativeName>
        <fullName evidence="1">Queuosine biosynthesis protein QueA</fullName>
    </alternativeName>
</protein>
<organism>
    <name type="scientific">Glaesserella parasuis serovar 5 (strain SH0165)</name>
    <name type="common">Haemophilus parasuis</name>
    <dbReference type="NCBI Taxonomy" id="557723"/>
    <lineage>
        <taxon>Bacteria</taxon>
        <taxon>Pseudomonadati</taxon>
        <taxon>Pseudomonadota</taxon>
        <taxon>Gammaproteobacteria</taxon>
        <taxon>Pasteurellales</taxon>
        <taxon>Pasteurellaceae</taxon>
        <taxon>Glaesserella</taxon>
    </lineage>
</organism>
<proteinExistence type="inferred from homology"/>
<dbReference type="EC" id="2.4.99.17" evidence="1"/>
<dbReference type="EMBL" id="CP001321">
    <property type="protein sequence ID" value="ACL32317.1"/>
    <property type="molecule type" value="Genomic_DNA"/>
</dbReference>
<dbReference type="RefSeq" id="WP_012621862.1">
    <property type="nucleotide sequence ID" value="NC_011852.1"/>
</dbReference>
<dbReference type="SMR" id="B8F4R5"/>
<dbReference type="STRING" id="557723.HAPS_0669"/>
<dbReference type="KEGG" id="hap:HAPS_0669"/>
<dbReference type="HOGENOM" id="CLU_039110_1_0_6"/>
<dbReference type="UniPathway" id="UPA00392"/>
<dbReference type="Proteomes" id="UP000006743">
    <property type="component" value="Chromosome"/>
</dbReference>
<dbReference type="GO" id="GO:0005737">
    <property type="term" value="C:cytoplasm"/>
    <property type="evidence" value="ECO:0007669"/>
    <property type="project" value="UniProtKB-SubCell"/>
</dbReference>
<dbReference type="GO" id="GO:0051075">
    <property type="term" value="F:S-adenosylmethionine:tRNA ribosyltransferase-isomerase activity"/>
    <property type="evidence" value="ECO:0007669"/>
    <property type="project" value="UniProtKB-EC"/>
</dbReference>
<dbReference type="GO" id="GO:0008616">
    <property type="term" value="P:queuosine biosynthetic process"/>
    <property type="evidence" value="ECO:0007669"/>
    <property type="project" value="UniProtKB-UniRule"/>
</dbReference>
<dbReference type="GO" id="GO:0002099">
    <property type="term" value="P:tRNA wobble guanine modification"/>
    <property type="evidence" value="ECO:0007669"/>
    <property type="project" value="TreeGrafter"/>
</dbReference>
<dbReference type="FunFam" id="2.40.10.240:FF:000001">
    <property type="entry name" value="S-adenosylmethionine:tRNA ribosyltransferase-isomerase"/>
    <property type="match status" value="1"/>
</dbReference>
<dbReference type="FunFam" id="3.40.1780.10:FF:000001">
    <property type="entry name" value="S-adenosylmethionine:tRNA ribosyltransferase-isomerase"/>
    <property type="match status" value="1"/>
</dbReference>
<dbReference type="Gene3D" id="2.40.10.240">
    <property type="entry name" value="QueA-like"/>
    <property type="match status" value="1"/>
</dbReference>
<dbReference type="Gene3D" id="3.40.1780.10">
    <property type="entry name" value="QueA-like"/>
    <property type="match status" value="1"/>
</dbReference>
<dbReference type="HAMAP" id="MF_00113">
    <property type="entry name" value="QueA"/>
    <property type="match status" value="1"/>
</dbReference>
<dbReference type="InterPro" id="IPR003699">
    <property type="entry name" value="QueA"/>
</dbReference>
<dbReference type="InterPro" id="IPR042118">
    <property type="entry name" value="QueA_dom1"/>
</dbReference>
<dbReference type="InterPro" id="IPR042119">
    <property type="entry name" value="QueA_dom2"/>
</dbReference>
<dbReference type="InterPro" id="IPR036100">
    <property type="entry name" value="QueA_sf"/>
</dbReference>
<dbReference type="NCBIfam" id="NF001140">
    <property type="entry name" value="PRK00147.1"/>
    <property type="match status" value="1"/>
</dbReference>
<dbReference type="NCBIfam" id="TIGR00113">
    <property type="entry name" value="queA"/>
    <property type="match status" value="1"/>
</dbReference>
<dbReference type="PANTHER" id="PTHR30307">
    <property type="entry name" value="S-ADENOSYLMETHIONINE:TRNA RIBOSYLTRANSFERASE-ISOMERASE"/>
    <property type="match status" value="1"/>
</dbReference>
<dbReference type="PANTHER" id="PTHR30307:SF0">
    <property type="entry name" value="S-ADENOSYLMETHIONINE:TRNA RIBOSYLTRANSFERASE-ISOMERASE"/>
    <property type="match status" value="1"/>
</dbReference>
<dbReference type="Pfam" id="PF02547">
    <property type="entry name" value="Queuosine_synth"/>
    <property type="match status" value="1"/>
</dbReference>
<dbReference type="SUPFAM" id="SSF111337">
    <property type="entry name" value="QueA-like"/>
    <property type="match status" value="1"/>
</dbReference>
<accession>B8F4R5</accession>
<gene>
    <name evidence="1" type="primary">queA</name>
    <name type="ordered locus">HAPS_0669</name>
</gene>
<reference key="1">
    <citation type="journal article" date="2009" name="J. Bacteriol.">
        <title>Complete genome sequence of Haemophilus parasuis SH0165.</title>
        <authorList>
            <person name="Yue M."/>
            <person name="Yang F."/>
            <person name="Yang J."/>
            <person name="Bei W."/>
            <person name="Cai X."/>
            <person name="Chen L."/>
            <person name="Dong J."/>
            <person name="Zhou R."/>
            <person name="Jin M."/>
            <person name="Jin Q."/>
            <person name="Chen H."/>
        </authorList>
    </citation>
    <scope>NUCLEOTIDE SEQUENCE [LARGE SCALE GENOMIC DNA]</scope>
    <source>
        <strain>SH0165</strain>
    </source>
</reference>
<feature type="chain" id="PRO_1000119155" description="S-adenosylmethionine:tRNA ribosyltransferase-isomerase">
    <location>
        <begin position="1"/>
        <end position="361"/>
    </location>
</feature>
<comment type="function">
    <text evidence="1">Transfers and isomerizes the ribose moiety from AdoMet to the 7-aminomethyl group of 7-deazaguanine (preQ1-tRNA) to give epoxyqueuosine (oQ-tRNA).</text>
</comment>
<comment type="catalytic activity">
    <reaction evidence="1">
        <text>7-aminomethyl-7-carbaguanosine(34) in tRNA + S-adenosyl-L-methionine = epoxyqueuosine(34) in tRNA + adenine + L-methionine + 2 H(+)</text>
        <dbReference type="Rhea" id="RHEA:32155"/>
        <dbReference type="Rhea" id="RHEA-COMP:10342"/>
        <dbReference type="Rhea" id="RHEA-COMP:18582"/>
        <dbReference type="ChEBI" id="CHEBI:15378"/>
        <dbReference type="ChEBI" id="CHEBI:16708"/>
        <dbReference type="ChEBI" id="CHEBI:57844"/>
        <dbReference type="ChEBI" id="CHEBI:59789"/>
        <dbReference type="ChEBI" id="CHEBI:82833"/>
        <dbReference type="ChEBI" id="CHEBI:194443"/>
        <dbReference type="EC" id="2.4.99.17"/>
    </reaction>
</comment>
<comment type="pathway">
    <text evidence="1">tRNA modification; tRNA-queuosine biosynthesis.</text>
</comment>
<comment type="subunit">
    <text evidence="1">Monomer.</text>
</comment>
<comment type="subcellular location">
    <subcellularLocation>
        <location evidence="1">Cytoplasm</location>
    </subcellularLocation>
</comment>
<comment type="similarity">
    <text evidence="1">Belongs to the QueA family.</text>
</comment>
<name>QUEA_GLAP5</name>
<evidence type="ECO:0000255" key="1">
    <source>
        <dbReference type="HAMAP-Rule" id="MF_00113"/>
    </source>
</evidence>